<protein>
    <recommendedName>
        <fullName evidence="1">ATP synthase epsilon chain</fullName>
    </recommendedName>
    <alternativeName>
        <fullName evidence="1">ATP synthase F1 sector epsilon subunit</fullName>
    </alternativeName>
    <alternativeName>
        <fullName evidence="1">F-ATPase epsilon subunit</fullName>
    </alternativeName>
</protein>
<keyword id="KW-0066">ATP synthesis</keyword>
<keyword id="KW-0997">Cell inner membrane</keyword>
<keyword id="KW-1003">Cell membrane</keyword>
<keyword id="KW-0139">CF(1)</keyword>
<keyword id="KW-0375">Hydrogen ion transport</keyword>
<keyword id="KW-0406">Ion transport</keyword>
<keyword id="KW-0472">Membrane</keyword>
<keyword id="KW-0813">Transport</keyword>
<organism>
    <name type="scientific">Pseudoalteromonas atlantica (strain T6c / ATCC BAA-1087)</name>
    <dbReference type="NCBI Taxonomy" id="3042615"/>
    <lineage>
        <taxon>Bacteria</taxon>
        <taxon>Pseudomonadati</taxon>
        <taxon>Pseudomonadota</taxon>
        <taxon>Gammaproteobacteria</taxon>
        <taxon>Alteromonadales</taxon>
        <taxon>Alteromonadaceae</taxon>
        <taxon>Paraglaciecola</taxon>
    </lineage>
</organism>
<gene>
    <name evidence="1" type="primary">atpC</name>
    <name type="ordered locus">Patl_4294</name>
</gene>
<evidence type="ECO:0000255" key="1">
    <source>
        <dbReference type="HAMAP-Rule" id="MF_00530"/>
    </source>
</evidence>
<dbReference type="EMBL" id="CP000388">
    <property type="protein sequence ID" value="ABG42793.1"/>
    <property type="molecule type" value="Genomic_DNA"/>
</dbReference>
<dbReference type="RefSeq" id="WP_006994924.1">
    <property type="nucleotide sequence ID" value="NC_008228.1"/>
</dbReference>
<dbReference type="SMR" id="Q15MU5"/>
<dbReference type="STRING" id="342610.Patl_4294"/>
<dbReference type="KEGG" id="pat:Patl_4294"/>
<dbReference type="eggNOG" id="COG0355">
    <property type="taxonomic scope" value="Bacteria"/>
</dbReference>
<dbReference type="HOGENOM" id="CLU_084338_2_0_6"/>
<dbReference type="OrthoDB" id="9791445at2"/>
<dbReference type="Proteomes" id="UP000001981">
    <property type="component" value="Chromosome"/>
</dbReference>
<dbReference type="GO" id="GO:0005886">
    <property type="term" value="C:plasma membrane"/>
    <property type="evidence" value="ECO:0007669"/>
    <property type="project" value="UniProtKB-SubCell"/>
</dbReference>
<dbReference type="GO" id="GO:0045259">
    <property type="term" value="C:proton-transporting ATP synthase complex"/>
    <property type="evidence" value="ECO:0007669"/>
    <property type="project" value="UniProtKB-KW"/>
</dbReference>
<dbReference type="GO" id="GO:0005524">
    <property type="term" value="F:ATP binding"/>
    <property type="evidence" value="ECO:0007669"/>
    <property type="project" value="UniProtKB-UniRule"/>
</dbReference>
<dbReference type="GO" id="GO:0046933">
    <property type="term" value="F:proton-transporting ATP synthase activity, rotational mechanism"/>
    <property type="evidence" value="ECO:0007669"/>
    <property type="project" value="UniProtKB-UniRule"/>
</dbReference>
<dbReference type="CDD" id="cd12152">
    <property type="entry name" value="F1-ATPase_delta"/>
    <property type="match status" value="1"/>
</dbReference>
<dbReference type="FunFam" id="2.60.15.10:FF:000001">
    <property type="entry name" value="ATP synthase epsilon chain"/>
    <property type="match status" value="1"/>
</dbReference>
<dbReference type="Gene3D" id="1.20.5.440">
    <property type="entry name" value="ATP synthase delta/epsilon subunit, C-terminal domain"/>
    <property type="match status" value="1"/>
</dbReference>
<dbReference type="Gene3D" id="2.60.15.10">
    <property type="entry name" value="F0F1 ATP synthase delta/epsilon subunit, N-terminal"/>
    <property type="match status" value="1"/>
</dbReference>
<dbReference type="HAMAP" id="MF_00530">
    <property type="entry name" value="ATP_synth_epsil_bac"/>
    <property type="match status" value="1"/>
</dbReference>
<dbReference type="InterPro" id="IPR036794">
    <property type="entry name" value="ATP_F1_dsu/esu_C_sf"/>
</dbReference>
<dbReference type="InterPro" id="IPR001469">
    <property type="entry name" value="ATP_synth_F1_dsu/esu"/>
</dbReference>
<dbReference type="InterPro" id="IPR020546">
    <property type="entry name" value="ATP_synth_F1_dsu/esu_N"/>
</dbReference>
<dbReference type="InterPro" id="IPR020547">
    <property type="entry name" value="ATP_synth_F1_esu_C"/>
</dbReference>
<dbReference type="InterPro" id="IPR036771">
    <property type="entry name" value="ATPsynth_dsu/esu_N"/>
</dbReference>
<dbReference type="NCBIfam" id="TIGR01216">
    <property type="entry name" value="ATP_synt_epsi"/>
    <property type="match status" value="1"/>
</dbReference>
<dbReference type="NCBIfam" id="NF001847">
    <property type="entry name" value="PRK00571.1-4"/>
    <property type="match status" value="1"/>
</dbReference>
<dbReference type="PANTHER" id="PTHR13822">
    <property type="entry name" value="ATP SYNTHASE DELTA/EPSILON CHAIN"/>
    <property type="match status" value="1"/>
</dbReference>
<dbReference type="PANTHER" id="PTHR13822:SF10">
    <property type="entry name" value="ATP SYNTHASE EPSILON CHAIN, CHLOROPLASTIC"/>
    <property type="match status" value="1"/>
</dbReference>
<dbReference type="Pfam" id="PF00401">
    <property type="entry name" value="ATP-synt_DE"/>
    <property type="match status" value="1"/>
</dbReference>
<dbReference type="Pfam" id="PF02823">
    <property type="entry name" value="ATP-synt_DE_N"/>
    <property type="match status" value="1"/>
</dbReference>
<dbReference type="SUPFAM" id="SSF46604">
    <property type="entry name" value="Epsilon subunit of F1F0-ATP synthase C-terminal domain"/>
    <property type="match status" value="1"/>
</dbReference>
<dbReference type="SUPFAM" id="SSF51344">
    <property type="entry name" value="Epsilon subunit of F1F0-ATP synthase N-terminal domain"/>
    <property type="match status" value="1"/>
</dbReference>
<reference key="1">
    <citation type="submission" date="2006-06" db="EMBL/GenBank/DDBJ databases">
        <title>Complete sequence of Pseudoalteromonas atlantica T6c.</title>
        <authorList>
            <consortium name="US DOE Joint Genome Institute"/>
            <person name="Copeland A."/>
            <person name="Lucas S."/>
            <person name="Lapidus A."/>
            <person name="Barry K."/>
            <person name="Detter J.C."/>
            <person name="Glavina del Rio T."/>
            <person name="Hammon N."/>
            <person name="Israni S."/>
            <person name="Dalin E."/>
            <person name="Tice H."/>
            <person name="Pitluck S."/>
            <person name="Saunders E."/>
            <person name="Brettin T."/>
            <person name="Bruce D."/>
            <person name="Han C."/>
            <person name="Tapia R."/>
            <person name="Gilna P."/>
            <person name="Schmutz J."/>
            <person name="Larimer F."/>
            <person name="Land M."/>
            <person name="Hauser L."/>
            <person name="Kyrpides N."/>
            <person name="Kim E."/>
            <person name="Karls A.C."/>
            <person name="Bartlett D."/>
            <person name="Higgins B.P."/>
            <person name="Richardson P."/>
        </authorList>
    </citation>
    <scope>NUCLEOTIDE SEQUENCE [LARGE SCALE GENOMIC DNA]</scope>
    <source>
        <strain>T6c / ATCC BAA-1087</strain>
    </source>
</reference>
<name>ATPE_PSEA6</name>
<comment type="function">
    <text evidence="1">Produces ATP from ADP in the presence of a proton gradient across the membrane.</text>
</comment>
<comment type="subunit">
    <text>F-type ATPases have 2 components, CF(1) - the catalytic core - and CF(0) - the membrane proton channel. CF(1) has five subunits: alpha(3), beta(3), gamma(1), delta(1), epsilon(1). CF(0) has three main subunits: a, b and c.</text>
</comment>
<comment type="subcellular location">
    <subcellularLocation>
        <location evidence="1">Cell inner membrane</location>
        <topology evidence="1">Peripheral membrane protein</topology>
    </subcellularLocation>
</comment>
<comment type="similarity">
    <text evidence="1">Belongs to the ATPase epsilon chain family.</text>
</comment>
<feature type="chain" id="PRO_0000265860" description="ATP synthase epsilon chain">
    <location>
        <begin position="1"/>
        <end position="137"/>
    </location>
</feature>
<sequence length="137" mass="14656">MAMTIQLDVVSAEDSIFSGLVQSIQVTGSEGELGVQYGHAPLLTTIKAGMVNVVKQHGEEELIYVAGGVLEVQPGHISVLADTALRAGDLDEQAVLEAKKRLEENIANPSADFEYAEAAAELAETIAQLRLIQKLRK</sequence>
<accession>Q15MU5</accession>
<proteinExistence type="inferred from homology"/>